<organism>
    <name type="scientific">Pseudomonas fluorescens (strain Pf0-1)</name>
    <dbReference type="NCBI Taxonomy" id="205922"/>
    <lineage>
        <taxon>Bacteria</taxon>
        <taxon>Pseudomonadati</taxon>
        <taxon>Pseudomonadota</taxon>
        <taxon>Gammaproteobacteria</taxon>
        <taxon>Pseudomonadales</taxon>
        <taxon>Pseudomonadaceae</taxon>
        <taxon>Pseudomonas</taxon>
    </lineage>
</organism>
<gene>
    <name evidence="1" type="primary">ureA</name>
    <name type="ordered locus">Pfl01_0584</name>
</gene>
<feature type="chain" id="PRO_0000234211" description="Urease subunit gamma">
    <location>
        <begin position="1"/>
        <end position="100"/>
    </location>
</feature>
<sequence>MDLTPREKDKLLIFTAGLVAERRLARGVKLNYPEAMAYISAALLEGARDGQTVAELMHYGTTLLTREQVMEGIPEMIPEIQVEATFPDGTKLVTVHQPIV</sequence>
<dbReference type="EC" id="3.5.1.5" evidence="1"/>
<dbReference type="EMBL" id="CP000094">
    <property type="protein sequence ID" value="ABA72328.1"/>
    <property type="molecule type" value="Genomic_DNA"/>
</dbReference>
<dbReference type="RefSeq" id="WP_011332234.1">
    <property type="nucleotide sequence ID" value="NC_007492.2"/>
</dbReference>
<dbReference type="SMR" id="Q3KIS8"/>
<dbReference type="KEGG" id="pfo:Pfl01_0584"/>
<dbReference type="eggNOG" id="COG0831">
    <property type="taxonomic scope" value="Bacteria"/>
</dbReference>
<dbReference type="HOGENOM" id="CLU_145825_1_0_6"/>
<dbReference type="UniPathway" id="UPA00258">
    <property type="reaction ID" value="UER00370"/>
</dbReference>
<dbReference type="Proteomes" id="UP000002704">
    <property type="component" value="Chromosome"/>
</dbReference>
<dbReference type="GO" id="GO:0005737">
    <property type="term" value="C:cytoplasm"/>
    <property type="evidence" value="ECO:0007669"/>
    <property type="project" value="UniProtKB-SubCell"/>
</dbReference>
<dbReference type="GO" id="GO:0016151">
    <property type="term" value="F:nickel cation binding"/>
    <property type="evidence" value="ECO:0007669"/>
    <property type="project" value="InterPro"/>
</dbReference>
<dbReference type="GO" id="GO:0009039">
    <property type="term" value="F:urease activity"/>
    <property type="evidence" value="ECO:0007669"/>
    <property type="project" value="UniProtKB-UniRule"/>
</dbReference>
<dbReference type="GO" id="GO:0043419">
    <property type="term" value="P:urea catabolic process"/>
    <property type="evidence" value="ECO:0007669"/>
    <property type="project" value="UniProtKB-UniRule"/>
</dbReference>
<dbReference type="CDD" id="cd00390">
    <property type="entry name" value="Urease_gamma"/>
    <property type="match status" value="1"/>
</dbReference>
<dbReference type="Gene3D" id="3.30.280.10">
    <property type="entry name" value="Urease, gamma-like subunit"/>
    <property type="match status" value="1"/>
</dbReference>
<dbReference type="HAMAP" id="MF_00739">
    <property type="entry name" value="Urease_gamma"/>
    <property type="match status" value="1"/>
</dbReference>
<dbReference type="InterPro" id="IPR012010">
    <property type="entry name" value="Urease_gamma"/>
</dbReference>
<dbReference type="InterPro" id="IPR002026">
    <property type="entry name" value="Urease_gamma/gamma-beta_su"/>
</dbReference>
<dbReference type="InterPro" id="IPR036463">
    <property type="entry name" value="Urease_gamma_sf"/>
</dbReference>
<dbReference type="InterPro" id="IPR050069">
    <property type="entry name" value="Urease_subunit"/>
</dbReference>
<dbReference type="NCBIfam" id="NF009712">
    <property type="entry name" value="PRK13241.1"/>
    <property type="match status" value="1"/>
</dbReference>
<dbReference type="NCBIfam" id="TIGR00193">
    <property type="entry name" value="urease_gam"/>
    <property type="match status" value="1"/>
</dbReference>
<dbReference type="PANTHER" id="PTHR33569">
    <property type="entry name" value="UREASE"/>
    <property type="match status" value="1"/>
</dbReference>
<dbReference type="PANTHER" id="PTHR33569:SF1">
    <property type="entry name" value="UREASE"/>
    <property type="match status" value="1"/>
</dbReference>
<dbReference type="Pfam" id="PF00547">
    <property type="entry name" value="Urease_gamma"/>
    <property type="match status" value="1"/>
</dbReference>
<dbReference type="PIRSF" id="PIRSF001223">
    <property type="entry name" value="Urease_gamma"/>
    <property type="match status" value="1"/>
</dbReference>
<dbReference type="SUPFAM" id="SSF54111">
    <property type="entry name" value="Urease, gamma-subunit"/>
    <property type="match status" value="1"/>
</dbReference>
<protein>
    <recommendedName>
        <fullName evidence="1">Urease subunit gamma</fullName>
        <ecNumber evidence="1">3.5.1.5</ecNumber>
    </recommendedName>
    <alternativeName>
        <fullName evidence="1">Urea amidohydrolase subunit gamma</fullName>
    </alternativeName>
</protein>
<keyword id="KW-0963">Cytoplasm</keyword>
<keyword id="KW-0378">Hydrolase</keyword>
<proteinExistence type="inferred from homology"/>
<reference key="1">
    <citation type="journal article" date="2009" name="Genome Biol.">
        <title>Genomic and genetic analyses of diversity and plant interactions of Pseudomonas fluorescens.</title>
        <authorList>
            <person name="Silby M.W."/>
            <person name="Cerdeno-Tarraga A.M."/>
            <person name="Vernikos G.S."/>
            <person name="Giddens S.R."/>
            <person name="Jackson R.W."/>
            <person name="Preston G.M."/>
            <person name="Zhang X.-X."/>
            <person name="Moon C.D."/>
            <person name="Gehrig S.M."/>
            <person name="Godfrey S.A.C."/>
            <person name="Knight C.G."/>
            <person name="Malone J.G."/>
            <person name="Robinson Z."/>
            <person name="Spiers A.J."/>
            <person name="Harris S."/>
            <person name="Challis G.L."/>
            <person name="Yaxley A.M."/>
            <person name="Harris D."/>
            <person name="Seeger K."/>
            <person name="Murphy L."/>
            <person name="Rutter S."/>
            <person name="Squares R."/>
            <person name="Quail M.A."/>
            <person name="Saunders E."/>
            <person name="Mavromatis K."/>
            <person name="Brettin T.S."/>
            <person name="Bentley S.D."/>
            <person name="Hothersall J."/>
            <person name="Stephens E."/>
            <person name="Thomas C.M."/>
            <person name="Parkhill J."/>
            <person name="Levy S.B."/>
            <person name="Rainey P.B."/>
            <person name="Thomson N.R."/>
        </authorList>
    </citation>
    <scope>NUCLEOTIDE SEQUENCE [LARGE SCALE GENOMIC DNA]</scope>
    <source>
        <strain>Pf0-1</strain>
    </source>
</reference>
<evidence type="ECO:0000255" key="1">
    <source>
        <dbReference type="HAMAP-Rule" id="MF_00739"/>
    </source>
</evidence>
<comment type="catalytic activity">
    <reaction evidence="1">
        <text>urea + 2 H2O + H(+) = hydrogencarbonate + 2 NH4(+)</text>
        <dbReference type="Rhea" id="RHEA:20557"/>
        <dbReference type="ChEBI" id="CHEBI:15377"/>
        <dbReference type="ChEBI" id="CHEBI:15378"/>
        <dbReference type="ChEBI" id="CHEBI:16199"/>
        <dbReference type="ChEBI" id="CHEBI:17544"/>
        <dbReference type="ChEBI" id="CHEBI:28938"/>
        <dbReference type="EC" id="3.5.1.5"/>
    </reaction>
</comment>
<comment type="pathway">
    <text evidence="1">Nitrogen metabolism; urea degradation; CO(2) and NH(3) from urea (urease route): step 1/1.</text>
</comment>
<comment type="subunit">
    <text evidence="1">Heterotrimer of UreA (gamma), UreB (beta) and UreC (alpha) subunits. Three heterotrimers associate to form the active enzyme.</text>
</comment>
<comment type="subcellular location">
    <subcellularLocation>
        <location evidence="1">Cytoplasm</location>
    </subcellularLocation>
</comment>
<comment type="similarity">
    <text evidence="1">Belongs to the urease gamma subunit family.</text>
</comment>
<accession>Q3KIS8</accession>
<name>URE3_PSEPF</name>